<proteinExistence type="inferred from homology"/>
<reference key="1">
    <citation type="journal article" date="2011" name="J. Bacteriol.">
        <title>Genome sequence of Thermotoga sp. strain RQ2, a hyperthermophilic bacterium isolated from a geothermally heated region of the seafloor near Ribeira Quente, the Azores.</title>
        <authorList>
            <person name="Swithers K.S."/>
            <person name="DiPippo J.L."/>
            <person name="Bruce D.C."/>
            <person name="Detter C."/>
            <person name="Tapia R."/>
            <person name="Han S."/>
            <person name="Saunders E."/>
            <person name="Goodwin L.A."/>
            <person name="Han J."/>
            <person name="Woyke T."/>
            <person name="Pitluck S."/>
            <person name="Pennacchio L."/>
            <person name="Nolan M."/>
            <person name="Mikhailova N."/>
            <person name="Lykidis A."/>
            <person name="Land M.L."/>
            <person name="Brettin T."/>
            <person name="Stetter K.O."/>
            <person name="Nelson K.E."/>
            <person name="Gogarten J.P."/>
            <person name="Noll K.M."/>
        </authorList>
    </citation>
    <scope>NUCLEOTIDE SEQUENCE [LARGE SCALE GENOMIC DNA]</scope>
    <source>
        <strain>RQ2</strain>
    </source>
</reference>
<name>RLMH_THESQ</name>
<gene>
    <name evidence="1" type="primary">rlmH</name>
    <name type="ordered locus">TRQ2_0083</name>
</gene>
<organism>
    <name type="scientific">Thermotoga sp. (strain RQ2)</name>
    <dbReference type="NCBI Taxonomy" id="126740"/>
    <lineage>
        <taxon>Bacteria</taxon>
        <taxon>Thermotogati</taxon>
        <taxon>Thermotogota</taxon>
        <taxon>Thermotogae</taxon>
        <taxon>Thermotogales</taxon>
        <taxon>Thermotogaceae</taxon>
        <taxon>Thermotoga</taxon>
    </lineage>
</organism>
<feature type="chain" id="PRO_0000366672" description="Ribosomal RNA large subunit methyltransferase H">
    <location>
        <begin position="1"/>
        <end position="151"/>
    </location>
</feature>
<feature type="binding site" evidence="1">
    <location>
        <position position="100"/>
    </location>
    <ligand>
        <name>S-adenosyl-L-methionine</name>
        <dbReference type="ChEBI" id="CHEBI:59789"/>
    </ligand>
</feature>
<feature type="binding site" evidence="1">
    <location>
        <begin position="119"/>
        <end position="124"/>
    </location>
    <ligand>
        <name>S-adenosyl-L-methionine</name>
        <dbReference type="ChEBI" id="CHEBI:59789"/>
    </ligand>
</feature>
<keyword id="KW-0963">Cytoplasm</keyword>
<keyword id="KW-0489">Methyltransferase</keyword>
<keyword id="KW-0698">rRNA processing</keyword>
<keyword id="KW-0949">S-adenosyl-L-methionine</keyword>
<keyword id="KW-0808">Transferase</keyword>
<accession>B1LCI7</accession>
<dbReference type="EC" id="2.1.1.177" evidence="1"/>
<dbReference type="EMBL" id="CP000969">
    <property type="protein sequence ID" value="ACB08445.1"/>
    <property type="molecule type" value="Genomic_DNA"/>
</dbReference>
<dbReference type="RefSeq" id="WP_011942786.1">
    <property type="nucleotide sequence ID" value="NC_010483.1"/>
</dbReference>
<dbReference type="SMR" id="B1LCI7"/>
<dbReference type="KEGG" id="trq:TRQ2_0083"/>
<dbReference type="HOGENOM" id="CLU_100552_2_0_0"/>
<dbReference type="Proteomes" id="UP000001687">
    <property type="component" value="Chromosome"/>
</dbReference>
<dbReference type="GO" id="GO:0005737">
    <property type="term" value="C:cytoplasm"/>
    <property type="evidence" value="ECO:0007669"/>
    <property type="project" value="UniProtKB-SubCell"/>
</dbReference>
<dbReference type="GO" id="GO:0070038">
    <property type="term" value="F:rRNA (pseudouridine-N3-)-methyltransferase activity"/>
    <property type="evidence" value="ECO:0007669"/>
    <property type="project" value="UniProtKB-UniRule"/>
</dbReference>
<dbReference type="CDD" id="cd18081">
    <property type="entry name" value="RlmH-like"/>
    <property type="match status" value="1"/>
</dbReference>
<dbReference type="Gene3D" id="3.40.1280.10">
    <property type="match status" value="1"/>
</dbReference>
<dbReference type="HAMAP" id="MF_00658">
    <property type="entry name" value="23SrRNA_methyltr_H"/>
    <property type="match status" value="1"/>
</dbReference>
<dbReference type="InterPro" id="IPR029028">
    <property type="entry name" value="Alpha/beta_knot_MTases"/>
</dbReference>
<dbReference type="InterPro" id="IPR003742">
    <property type="entry name" value="RlmH-like"/>
</dbReference>
<dbReference type="InterPro" id="IPR029026">
    <property type="entry name" value="tRNA_m1G_MTases_N"/>
</dbReference>
<dbReference type="PANTHER" id="PTHR33603">
    <property type="entry name" value="METHYLTRANSFERASE"/>
    <property type="match status" value="1"/>
</dbReference>
<dbReference type="PANTHER" id="PTHR33603:SF1">
    <property type="entry name" value="RIBOSOMAL RNA LARGE SUBUNIT METHYLTRANSFERASE H"/>
    <property type="match status" value="1"/>
</dbReference>
<dbReference type="Pfam" id="PF02590">
    <property type="entry name" value="SPOUT_MTase"/>
    <property type="match status" value="1"/>
</dbReference>
<dbReference type="PIRSF" id="PIRSF004505">
    <property type="entry name" value="MT_bac"/>
    <property type="match status" value="1"/>
</dbReference>
<dbReference type="SUPFAM" id="SSF75217">
    <property type="entry name" value="alpha/beta knot"/>
    <property type="match status" value="1"/>
</dbReference>
<comment type="function">
    <text evidence="1">Specifically methylates the pseudouridine at position 1915 (m3Psi1915) in 23S rRNA.</text>
</comment>
<comment type="catalytic activity">
    <reaction evidence="1">
        <text>pseudouridine(1915) in 23S rRNA + S-adenosyl-L-methionine = N(3)-methylpseudouridine(1915) in 23S rRNA + S-adenosyl-L-homocysteine + H(+)</text>
        <dbReference type="Rhea" id="RHEA:42752"/>
        <dbReference type="Rhea" id="RHEA-COMP:10221"/>
        <dbReference type="Rhea" id="RHEA-COMP:10222"/>
        <dbReference type="ChEBI" id="CHEBI:15378"/>
        <dbReference type="ChEBI" id="CHEBI:57856"/>
        <dbReference type="ChEBI" id="CHEBI:59789"/>
        <dbReference type="ChEBI" id="CHEBI:65314"/>
        <dbReference type="ChEBI" id="CHEBI:74486"/>
        <dbReference type="EC" id="2.1.1.177"/>
    </reaction>
</comment>
<comment type="subunit">
    <text evidence="1">Homodimer.</text>
</comment>
<comment type="subcellular location">
    <subcellularLocation>
        <location evidence="1">Cytoplasm</location>
    </subcellularLocation>
</comment>
<comment type="similarity">
    <text evidence="1">Belongs to the RNA methyltransferase RlmH family.</text>
</comment>
<protein>
    <recommendedName>
        <fullName evidence="1">Ribosomal RNA large subunit methyltransferase H</fullName>
        <ecNumber evidence="1">2.1.1.177</ecNumber>
    </recommendedName>
    <alternativeName>
        <fullName evidence="1">23S rRNA (pseudouridine1915-N3)-methyltransferase</fullName>
    </alternativeName>
    <alternativeName>
        <fullName evidence="1">23S rRNA m3Psi1915 methyltransferase</fullName>
    </alternativeName>
    <alternativeName>
        <fullName evidence="1">rRNA (pseudouridine-N3-)-methyltransferase RlmH</fullName>
    </alternativeName>
</protein>
<evidence type="ECO:0000255" key="1">
    <source>
        <dbReference type="HAMAP-Rule" id="MF_00658"/>
    </source>
</evidence>
<sequence length="151" mass="17553">MKVRIAVVGKLDGFIKEGIKHYEKFLRRFCKLEVLEIKRVHRGSIEEIVRKETEDLANRILLGSFVMVMDRRGEEVSSEEFADFLKDLEMKGKDITILIGGPHGLNEEIFAKAHRVFSLSKMTFTHGMTVLIVLEQIFRAFKIIHGENYHY</sequence>